<name>RIMO_ENDTX</name>
<accession>B1GZH1</accession>
<proteinExistence type="inferred from homology"/>
<sequence>MTDNIMQTIAVIALGCPKNTVEAEYLLGIFQEKGFKISSNLDKADIVVIHTCSFIKAAKAESEKCIRTILDIKKKKSLRVYVSGCLPQLLKEKMSVLFPDIDGFAGTGTLQYLPDLVFGKNFGRFILPPGGLNDSNYRVLSSTIPSAYLKIAEGCGHVCSFCIIPALRGRYESRTMESLVDEVAALAESGIKELILIAQDTTGYGKDIYGAFVLDKLLVKLSKINGLKWIRLLYAYPSSITDGLIEVFKEHKKICSYMDIPIQHASKNVLSAMKRPLNTPGIIEKIKRKLPDIVLRTSIIAGFPGETKKDVNELINFLNRGYFQYAGVFEYSDLKEAVSSKLKRHVRAAAAKERKIMIENAQYNIFQAKIDKIKNNTIEFLVESCLKKGNVYSIKGRSSFQSPEIDGNIILENDKPLTVGGFCKAKVRSVDGYNIKVYI</sequence>
<keyword id="KW-0004">4Fe-4S</keyword>
<keyword id="KW-0963">Cytoplasm</keyword>
<keyword id="KW-0408">Iron</keyword>
<keyword id="KW-0411">Iron-sulfur</keyword>
<keyword id="KW-0479">Metal-binding</keyword>
<keyword id="KW-0949">S-adenosyl-L-methionine</keyword>
<keyword id="KW-0808">Transferase</keyword>
<gene>
    <name evidence="1" type="primary">rimO</name>
    <name type="ordered locus">TGRD_170</name>
</gene>
<comment type="function">
    <text evidence="1">Catalyzes the methylthiolation of an aspartic acid residue of ribosomal protein uS12.</text>
</comment>
<comment type="catalytic activity">
    <reaction evidence="1">
        <text>L-aspartate(89)-[ribosomal protein uS12]-hydrogen + (sulfur carrier)-SH + AH2 + 2 S-adenosyl-L-methionine = 3-methylsulfanyl-L-aspartate(89)-[ribosomal protein uS12]-hydrogen + (sulfur carrier)-H + 5'-deoxyadenosine + L-methionine + A + S-adenosyl-L-homocysteine + 2 H(+)</text>
        <dbReference type="Rhea" id="RHEA:37087"/>
        <dbReference type="Rhea" id="RHEA-COMP:10460"/>
        <dbReference type="Rhea" id="RHEA-COMP:10461"/>
        <dbReference type="Rhea" id="RHEA-COMP:14737"/>
        <dbReference type="Rhea" id="RHEA-COMP:14739"/>
        <dbReference type="ChEBI" id="CHEBI:13193"/>
        <dbReference type="ChEBI" id="CHEBI:15378"/>
        <dbReference type="ChEBI" id="CHEBI:17319"/>
        <dbReference type="ChEBI" id="CHEBI:17499"/>
        <dbReference type="ChEBI" id="CHEBI:29917"/>
        <dbReference type="ChEBI" id="CHEBI:29961"/>
        <dbReference type="ChEBI" id="CHEBI:57844"/>
        <dbReference type="ChEBI" id="CHEBI:57856"/>
        <dbReference type="ChEBI" id="CHEBI:59789"/>
        <dbReference type="ChEBI" id="CHEBI:64428"/>
        <dbReference type="ChEBI" id="CHEBI:73599"/>
        <dbReference type="EC" id="2.8.4.4"/>
    </reaction>
</comment>
<comment type="cofactor">
    <cofactor evidence="1">
        <name>[4Fe-4S] cluster</name>
        <dbReference type="ChEBI" id="CHEBI:49883"/>
    </cofactor>
    <text evidence="1">Binds 2 [4Fe-4S] clusters. One cluster is coordinated with 3 cysteines and an exchangeable S-adenosyl-L-methionine.</text>
</comment>
<comment type="subcellular location">
    <subcellularLocation>
        <location evidence="1">Cytoplasm</location>
    </subcellularLocation>
</comment>
<comment type="similarity">
    <text evidence="1">Belongs to the methylthiotransferase family. RimO subfamily.</text>
</comment>
<evidence type="ECO:0000255" key="1">
    <source>
        <dbReference type="HAMAP-Rule" id="MF_01865"/>
    </source>
</evidence>
<evidence type="ECO:0000255" key="2">
    <source>
        <dbReference type="PROSITE-ProRule" id="PRU01266"/>
    </source>
</evidence>
<dbReference type="EC" id="2.8.4.4" evidence="1"/>
<dbReference type="EMBL" id="AP009510">
    <property type="protein sequence ID" value="BAG13653.1"/>
    <property type="molecule type" value="Genomic_DNA"/>
</dbReference>
<dbReference type="RefSeq" id="WP_015423181.1">
    <property type="nucleotide sequence ID" value="NC_020419.1"/>
</dbReference>
<dbReference type="SMR" id="B1GZH1"/>
<dbReference type="STRING" id="471821.TGRD_170"/>
<dbReference type="KEGG" id="rsd:TGRD_170"/>
<dbReference type="PATRIC" id="fig|471821.5.peg.253"/>
<dbReference type="HOGENOM" id="CLU_018697_0_1_0"/>
<dbReference type="Proteomes" id="UP000001691">
    <property type="component" value="Chromosome"/>
</dbReference>
<dbReference type="GO" id="GO:0005829">
    <property type="term" value="C:cytosol"/>
    <property type="evidence" value="ECO:0007669"/>
    <property type="project" value="TreeGrafter"/>
</dbReference>
<dbReference type="GO" id="GO:0051539">
    <property type="term" value="F:4 iron, 4 sulfur cluster binding"/>
    <property type="evidence" value="ECO:0007669"/>
    <property type="project" value="UniProtKB-UniRule"/>
</dbReference>
<dbReference type="GO" id="GO:0035599">
    <property type="term" value="F:aspartic acid methylthiotransferase activity"/>
    <property type="evidence" value="ECO:0007669"/>
    <property type="project" value="TreeGrafter"/>
</dbReference>
<dbReference type="GO" id="GO:0046872">
    <property type="term" value="F:metal ion binding"/>
    <property type="evidence" value="ECO:0007669"/>
    <property type="project" value="UniProtKB-KW"/>
</dbReference>
<dbReference type="GO" id="GO:0103039">
    <property type="term" value="F:protein methylthiotransferase activity"/>
    <property type="evidence" value="ECO:0007669"/>
    <property type="project" value="UniProtKB-EC"/>
</dbReference>
<dbReference type="GO" id="GO:0006400">
    <property type="term" value="P:tRNA modification"/>
    <property type="evidence" value="ECO:0007669"/>
    <property type="project" value="InterPro"/>
</dbReference>
<dbReference type="CDD" id="cd01335">
    <property type="entry name" value="Radical_SAM"/>
    <property type="match status" value="1"/>
</dbReference>
<dbReference type="FunFam" id="3.80.30.20:FF:000001">
    <property type="entry name" value="tRNA-2-methylthio-N(6)-dimethylallyladenosine synthase 2"/>
    <property type="match status" value="1"/>
</dbReference>
<dbReference type="Gene3D" id="3.40.50.12160">
    <property type="entry name" value="Methylthiotransferase, N-terminal domain"/>
    <property type="match status" value="1"/>
</dbReference>
<dbReference type="Gene3D" id="2.40.50.140">
    <property type="entry name" value="Nucleic acid-binding proteins"/>
    <property type="match status" value="1"/>
</dbReference>
<dbReference type="Gene3D" id="3.80.30.20">
    <property type="entry name" value="tm_1862 like domain"/>
    <property type="match status" value="1"/>
</dbReference>
<dbReference type="HAMAP" id="MF_01865">
    <property type="entry name" value="MTTase_RimO"/>
    <property type="match status" value="1"/>
</dbReference>
<dbReference type="InterPro" id="IPR006638">
    <property type="entry name" value="Elp3/MiaA/NifB-like_rSAM"/>
</dbReference>
<dbReference type="InterPro" id="IPR005839">
    <property type="entry name" value="Methylthiotransferase"/>
</dbReference>
<dbReference type="InterPro" id="IPR020612">
    <property type="entry name" value="Methylthiotransferase_CS"/>
</dbReference>
<dbReference type="InterPro" id="IPR013848">
    <property type="entry name" value="Methylthiotransferase_N"/>
</dbReference>
<dbReference type="InterPro" id="IPR038135">
    <property type="entry name" value="Methylthiotransferase_N_sf"/>
</dbReference>
<dbReference type="InterPro" id="IPR012340">
    <property type="entry name" value="NA-bd_OB-fold"/>
</dbReference>
<dbReference type="InterPro" id="IPR005840">
    <property type="entry name" value="Ribosomal_uS12_MeSTrfase_RimO"/>
</dbReference>
<dbReference type="InterPro" id="IPR007197">
    <property type="entry name" value="rSAM"/>
</dbReference>
<dbReference type="InterPro" id="IPR023404">
    <property type="entry name" value="rSAM_horseshoe"/>
</dbReference>
<dbReference type="InterPro" id="IPR002792">
    <property type="entry name" value="TRAM_dom"/>
</dbReference>
<dbReference type="NCBIfam" id="TIGR01125">
    <property type="entry name" value="30S ribosomal protein S12 methylthiotransferase RimO"/>
    <property type="match status" value="1"/>
</dbReference>
<dbReference type="NCBIfam" id="TIGR00089">
    <property type="entry name" value="MiaB/RimO family radical SAM methylthiotransferase"/>
    <property type="match status" value="1"/>
</dbReference>
<dbReference type="PANTHER" id="PTHR43837">
    <property type="entry name" value="RIBOSOMAL PROTEIN S12 METHYLTHIOTRANSFERASE RIMO"/>
    <property type="match status" value="1"/>
</dbReference>
<dbReference type="PANTHER" id="PTHR43837:SF1">
    <property type="entry name" value="RIBOSOMAL PROTEIN US12 METHYLTHIOTRANSFERASE RIMO"/>
    <property type="match status" value="1"/>
</dbReference>
<dbReference type="Pfam" id="PF04055">
    <property type="entry name" value="Radical_SAM"/>
    <property type="match status" value="1"/>
</dbReference>
<dbReference type="Pfam" id="PF18693">
    <property type="entry name" value="TRAM_2"/>
    <property type="match status" value="1"/>
</dbReference>
<dbReference type="Pfam" id="PF00919">
    <property type="entry name" value="UPF0004"/>
    <property type="match status" value="1"/>
</dbReference>
<dbReference type="SFLD" id="SFLDG01082">
    <property type="entry name" value="B12-binding_domain_containing"/>
    <property type="match status" value="1"/>
</dbReference>
<dbReference type="SFLD" id="SFLDG01061">
    <property type="entry name" value="methylthiotransferase"/>
    <property type="match status" value="1"/>
</dbReference>
<dbReference type="SFLD" id="SFLDS00029">
    <property type="entry name" value="Radical_SAM"/>
    <property type="match status" value="1"/>
</dbReference>
<dbReference type="SMART" id="SM00729">
    <property type="entry name" value="Elp3"/>
    <property type="match status" value="1"/>
</dbReference>
<dbReference type="SUPFAM" id="SSF102114">
    <property type="entry name" value="Radical SAM enzymes"/>
    <property type="match status" value="1"/>
</dbReference>
<dbReference type="PROSITE" id="PS51449">
    <property type="entry name" value="MTTASE_N"/>
    <property type="match status" value="1"/>
</dbReference>
<dbReference type="PROSITE" id="PS01278">
    <property type="entry name" value="MTTASE_RADICAL"/>
    <property type="match status" value="1"/>
</dbReference>
<dbReference type="PROSITE" id="PS51918">
    <property type="entry name" value="RADICAL_SAM"/>
    <property type="match status" value="1"/>
</dbReference>
<protein>
    <recommendedName>
        <fullName evidence="1">Ribosomal protein uS12 methylthiotransferase RimO</fullName>
        <shortName evidence="1">uS12 MTTase</shortName>
        <shortName evidence="1">uS12 methylthiotransferase</shortName>
        <ecNumber evidence="1">2.8.4.4</ecNumber>
    </recommendedName>
    <alternativeName>
        <fullName evidence="1">Ribosomal protein uS12 (aspartate-C(3))-methylthiotransferase</fullName>
    </alternativeName>
    <alternativeName>
        <fullName evidence="1">Ribosome maturation factor RimO</fullName>
    </alternativeName>
</protein>
<feature type="chain" id="PRO_0000375061" description="Ribosomal protein uS12 methylthiotransferase RimO">
    <location>
        <begin position="1"/>
        <end position="439"/>
    </location>
</feature>
<feature type="domain" description="MTTase N-terminal" evidence="1">
    <location>
        <begin position="7"/>
        <end position="122"/>
    </location>
</feature>
<feature type="domain" description="Radical SAM core" evidence="2">
    <location>
        <begin position="141"/>
        <end position="369"/>
    </location>
</feature>
<feature type="binding site" evidence="1">
    <location>
        <position position="16"/>
    </location>
    <ligand>
        <name>[4Fe-4S] cluster</name>
        <dbReference type="ChEBI" id="CHEBI:49883"/>
        <label>1</label>
    </ligand>
</feature>
<feature type="binding site" evidence="1">
    <location>
        <position position="52"/>
    </location>
    <ligand>
        <name>[4Fe-4S] cluster</name>
        <dbReference type="ChEBI" id="CHEBI:49883"/>
        <label>1</label>
    </ligand>
</feature>
<feature type="binding site" evidence="1">
    <location>
        <position position="85"/>
    </location>
    <ligand>
        <name>[4Fe-4S] cluster</name>
        <dbReference type="ChEBI" id="CHEBI:49883"/>
        <label>1</label>
    </ligand>
</feature>
<feature type="binding site" evidence="1">
    <location>
        <position position="155"/>
    </location>
    <ligand>
        <name>[4Fe-4S] cluster</name>
        <dbReference type="ChEBI" id="CHEBI:49883"/>
        <label>2</label>
        <note>4Fe-4S-S-AdoMet</note>
    </ligand>
</feature>
<feature type="binding site" evidence="1">
    <location>
        <position position="159"/>
    </location>
    <ligand>
        <name>[4Fe-4S] cluster</name>
        <dbReference type="ChEBI" id="CHEBI:49883"/>
        <label>2</label>
        <note>4Fe-4S-S-AdoMet</note>
    </ligand>
</feature>
<feature type="binding site" evidence="1">
    <location>
        <position position="162"/>
    </location>
    <ligand>
        <name>[4Fe-4S] cluster</name>
        <dbReference type="ChEBI" id="CHEBI:49883"/>
        <label>2</label>
        <note>4Fe-4S-S-AdoMet</note>
    </ligand>
</feature>
<organism>
    <name type="scientific">Endomicrobium trichonymphae</name>
    <dbReference type="NCBI Taxonomy" id="1408204"/>
    <lineage>
        <taxon>Bacteria</taxon>
        <taxon>Pseudomonadati</taxon>
        <taxon>Elusimicrobiota</taxon>
        <taxon>Endomicrobiia</taxon>
        <taxon>Endomicrobiales</taxon>
        <taxon>Endomicrobiaceae</taxon>
        <taxon>Candidatus Endomicrobiellum</taxon>
    </lineage>
</organism>
<reference key="1">
    <citation type="journal article" date="2008" name="Proc. Natl. Acad. Sci. U.S.A.">
        <title>Complete genome of the uncultured termite group 1 bacteria in a single host protist cell.</title>
        <authorList>
            <person name="Hongoh Y."/>
            <person name="Sharma V.K."/>
            <person name="Prakash T."/>
            <person name="Noda S."/>
            <person name="Taylor T.D."/>
            <person name="Kudo T."/>
            <person name="Sakaki Y."/>
            <person name="Toyoda A."/>
            <person name="Hattori M."/>
            <person name="Ohkuma M."/>
        </authorList>
    </citation>
    <scope>NUCLEOTIDE SEQUENCE [LARGE SCALE GENOMIC DNA]</scope>
</reference>